<protein>
    <recommendedName>
        <fullName evidence="1">Transcription antitermination protein NusB</fullName>
    </recommendedName>
    <alternativeName>
        <fullName evidence="1">Antitermination factor NusB</fullName>
    </alternativeName>
</protein>
<keyword id="KW-1185">Reference proteome</keyword>
<keyword id="KW-0694">RNA-binding</keyword>
<keyword id="KW-0804">Transcription</keyword>
<keyword id="KW-0889">Transcription antitermination</keyword>
<keyword id="KW-0805">Transcription regulation</keyword>
<proteinExistence type="inferred from homology"/>
<organism>
    <name type="scientific">Levilactobacillus brevis (strain ATCC 367 / BCRC 12310 / CIP 105137 / JCM 1170 / LMG 11437 / NCIMB 947 / NCTC 947)</name>
    <name type="common">Lactobacillus brevis</name>
    <dbReference type="NCBI Taxonomy" id="387344"/>
    <lineage>
        <taxon>Bacteria</taxon>
        <taxon>Bacillati</taxon>
        <taxon>Bacillota</taxon>
        <taxon>Bacilli</taxon>
        <taxon>Lactobacillales</taxon>
        <taxon>Lactobacillaceae</taxon>
        <taxon>Levilactobacillus</taxon>
    </lineage>
</organism>
<dbReference type="EMBL" id="CP000416">
    <property type="protein sequence ID" value="ABJ64112.1"/>
    <property type="molecule type" value="Genomic_DNA"/>
</dbReference>
<dbReference type="RefSeq" id="WP_011667702.1">
    <property type="nucleotide sequence ID" value="NC_008497.1"/>
</dbReference>
<dbReference type="SMR" id="Q03RR0"/>
<dbReference type="STRING" id="387344.LVIS_0979"/>
<dbReference type="GeneID" id="56992800"/>
<dbReference type="KEGG" id="lbr:LVIS_0979"/>
<dbReference type="eggNOG" id="COG0781">
    <property type="taxonomic scope" value="Bacteria"/>
</dbReference>
<dbReference type="HOGENOM" id="CLU_087843_3_3_9"/>
<dbReference type="Proteomes" id="UP000001652">
    <property type="component" value="Chromosome"/>
</dbReference>
<dbReference type="GO" id="GO:0005829">
    <property type="term" value="C:cytosol"/>
    <property type="evidence" value="ECO:0007669"/>
    <property type="project" value="TreeGrafter"/>
</dbReference>
<dbReference type="GO" id="GO:0003723">
    <property type="term" value="F:RNA binding"/>
    <property type="evidence" value="ECO:0007669"/>
    <property type="project" value="UniProtKB-UniRule"/>
</dbReference>
<dbReference type="GO" id="GO:0006353">
    <property type="term" value="P:DNA-templated transcription termination"/>
    <property type="evidence" value="ECO:0007669"/>
    <property type="project" value="UniProtKB-UniRule"/>
</dbReference>
<dbReference type="GO" id="GO:0031564">
    <property type="term" value="P:transcription antitermination"/>
    <property type="evidence" value="ECO:0007669"/>
    <property type="project" value="UniProtKB-KW"/>
</dbReference>
<dbReference type="Gene3D" id="1.10.940.10">
    <property type="entry name" value="NusB-like"/>
    <property type="match status" value="1"/>
</dbReference>
<dbReference type="HAMAP" id="MF_00073">
    <property type="entry name" value="NusB"/>
    <property type="match status" value="1"/>
</dbReference>
<dbReference type="InterPro" id="IPR035926">
    <property type="entry name" value="NusB-like_sf"/>
</dbReference>
<dbReference type="InterPro" id="IPR011605">
    <property type="entry name" value="NusB_fam"/>
</dbReference>
<dbReference type="InterPro" id="IPR006027">
    <property type="entry name" value="NusB_RsmB_TIM44"/>
</dbReference>
<dbReference type="NCBIfam" id="TIGR01951">
    <property type="entry name" value="nusB"/>
    <property type="match status" value="1"/>
</dbReference>
<dbReference type="NCBIfam" id="NF001223">
    <property type="entry name" value="PRK00202.1-1"/>
    <property type="match status" value="1"/>
</dbReference>
<dbReference type="PANTHER" id="PTHR11078:SF3">
    <property type="entry name" value="ANTITERMINATION NUSB DOMAIN-CONTAINING PROTEIN"/>
    <property type="match status" value="1"/>
</dbReference>
<dbReference type="PANTHER" id="PTHR11078">
    <property type="entry name" value="N UTILIZATION SUBSTANCE PROTEIN B-RELATED"/>
    <property type="match status" value="1"/>
</dbReference>
<dbReference type="Pfam" id="PF01029">
    <property type="entry name" value="NusB"/>
    <property type="match status" value="1"/>
</dbReference>
<dbReference type="SUPFAM" id="SSF48013">
    <property type="entry name" value="NusB-like"/>
    <property type="match status" value="1"/>
</dbReference>
<evidence type="ECO:0000255" key="1">
    <source>
        <dbReference type="HAMAP-Rule" id="MF_00073"/>
    </source>
</evidence>
<sequence length="142" mass="16231">MTLTRHQIRERAFQMLFALNANPEADHDALYQRVLTDDPNQLVPVPDYLATLVNGVLAHQSELDAQIDQYLSTGWQLKRIAKTDLVILRMAFYEIEHVDDVPNRVAVNEALELAKNFSDDRSRRFINGVLAHTLDDETDTQA</sequence>
<accession>Q03RR0</accession>
<feature type="chain" id="PRO_1000023741" description="Transcription antitermination protein NusB">
    <location>
        <begin position="1"/>
        <end position="142"/>
    </location>
</feature>
<comment type="function">
    <text evidence="1">Involved in transcription antitermination. Required for transcription of ribosomal RNA (rRNA) genes. Binds specifically to the boxA antiterminator sequence of the ribosomal RNA (rrn) operons.</text>
</comment>
<comment type="similarity">
    <text evidence="1">Belongs to the NusB family.</text>
</comment>
<reference key="1">
    <citation type="journal article" date="2006" name="Proc. Natl. Acad. Sci. U.S.A.">
        <title>Comparative genomics of the lactic acid bacteria.</title>
        <authorList>
            <person name="Makarova K.S."/>
            <person name="Slesarev A."/>
            <person name="Wolf Y.I."/>
            <person name="Sorokin A."/>
            <person name="Mirkin B."/>
            <person name="Koonin E.V."/>
            <person name="Pavlov A."/>
            <person name="Pavlova N."/>
            <person name="Karamychev V."/>
            <person name="Polouchine N."/>
            <person name="Shakhova V."/>
            <person name="Grigoriev I."/>
            <person name="Lou Y."/>
            <person name="Rohksar D."/>
            <person name="Lucas S."/>
            <person name="Huang K."/>
            <person name="Goodstein D.M."/>
            <person name="Hawkins T."/>
            <person name="Plengvidhya V."/>
            <person name="Welker D."/>
            <person name="Hughes J."/>
            <person name="Goh Y."/>
            <person name="Benson A."/>
            <person name="Baldwin K."/>
            <person name="Lee J.-H."/>
            <person name="Diaz-Muniz I."/>
            <person name="Dosti B."/>
            <person name="Smeianov V."/>
            <person name="Wechter W."/>
            <person name="Barabote R."/>
            <person name="Lorca G."/>
            <person name="Altermann E."/>
            <person name="Barrangou R."/>
            <person name="Ganesan B."/>
            <person name="Xie Y."/>
            <person name="Rawsthorne H."/>
            <person name="Tamir D."/>
            <person name="Parker C."/>
            <person name="Breidt F."/>
            <person name="Broadbent J.R."/>
            <person name="Hutkins R."/>
            <person name="O'Sullivan D."/>
            <person name="Steele J."/>
            <person name="Unlu G."/>
            <person name="Saier M.H. Jr."/>
            <person name="Klaenhammer T."/>
            <person name="Richardson P."/>
            <person name="Kozyavkin S."/>
            <person name="Weimer B.C."/>
            <person name="Mills D.A."/>
        </authorList>
    </citation>
    <scope>NUCLEOTIDE SEQUENCE [LARGE SCALE GENOMIC DNA]</scope>
    <source>
        <strain>ATCC 367 / BCRC 12310 / CIP 105137 / JCM 1170 / LMG 11437 / NCIMB 947 / NCTC 947</strain>
    </source>
</reference>
<gene>
    <name evidence="1" type="primary">nusB</name>
    <name type="ordered locus">LVIS_0979</name>
</gene>
<name>NUSB_LEVBA</name>